<feature type="chain" id="PRO_0000331065" description="SsrA-binding protein">
    <location>
        <begin position="1"/>
        <end position="168"/>
    </location>
</feature>
<keyword id="KW-0963">Cytoplasm</keyword>
<keyword id="KW-0694">RNA-binding</keyword>
<gene>
    <name evidence="1" type="primary">smpB</name>
    <name type="ordered locus">Mjls_1584</name>
</gene>
<comment type="function">
    <text evidence="1">Required for rescue of stalled ribosomes mediated by trans-translation. Binds to transfer-messenger RNA (tmRNA), required for stable association of tmRNA with ribosomes. tmRNA and SmpB together mimic tRNA shape, replacing the anticodon stem-loop with SmpB. tmRNA is encoded by the ssrA gene; the 2 termini fold to resemble tRNA(Ala) and it encodes a 'tag peptide', a short internal open reading frame. During trans-translation Ala-aminoacylated tmRNA acts like a tRNA, entering the A-site of stalled ribosomes, displacing the stalled mRNA. The ribosome then switches to translate the ORF on the tmRNA; the nascent peptide is terminated with the 'tag peptide' encoded by the tmRNA and targeted for degradation. The ribosome is freed to recommence translation, which seems to be the essential function of trans-translation.</text>
</comment>
<comment type="subcellular location">
    <subcellularLocation>
        <location evidence="1">Cytoplasm</location>
    </subcellularLocation>
    <text evidence="1">The tmRNA-SmpB complex associates with stalled 70S ribosomes.</text>
</comment>
<comment type="similarity">
    <text evidence="1">Belongs to the SmpB family.</text>
</comment>
<protein>
    <recommendedName>
        <fullName evidence="1">SsrA-binding protein</fullName>
    </recommendedName>
    <alternativeName>
        <fullName evidence="1">Small protein B</fullName>
    </alternativeName>
</protein>
<name>SSRP_MYCSJ</name>
<accession>A3PWV5</accession>
<dbReference type="EMBL" id="CP000580">
    <property type="protein sequence ID" value="ABN97382.1"/>
    <property type="molecule type" value="Genomic_DNA"/>
</dbReference>
<dbReference type="SMR" id="A3PWV5"/>
<dbReference type="KEGG" id="mjl:Mjls_1584"/>
<dbReference type="HOGENOM" id="CLU_108953_2_1_11"/>
<dbReference type="BioCyc" id="MSP164757:G1G8C-1601-MONOMER"/>
<dbReference type="GO" id="GO:0005829">
    <property type="term" value="C:cytosol"/>
    <property type="evidence" value="ECO:0007669"/>
    <property type="project" value="TreeGrafter"/>
</dbReference>
<dbReference type="GO" id="GO:0003723">
    <property type="term" value="F:RNA binding"/>
    <property type="evidence" value="ECO:0007669"/>
    <property type="project" value="UniProtKB-UniRule"/>
</dbReference>
<dbReference type="GO" id="GO:0070929">
    <property type="term" value="P:trans-translation"/>
    <property type="evidence" value="ECO:0007669"/>
    <property type="project" value="UniProtKB-UniRule"/>
</dbReference>
<dbReference type="CDD" id="cd09294">
    <property type="entry name" value="SmpB"/>
    <property type="match status" value="1"/>
</dbReference>
<dbReference type="Gene3D" id="2.40.280.10">
    <property type="match status" value="1"/>
</dbReference>
<dbReference type="HAMAP" id="MF_00023">
    <property type="entry name" value="SmpB"/>
    <property type="match status" value="1"/>
</dbReference>
<dbReference type="InterPro" id="IPR023620">
    <property type="entry name" value="SmpB"/>
</dbReference>
<dbReference type="InterPro" id="IPR000037">
    <property type="entry name" value="SsrA-bd_prot"/>
</dbReference>
<dbReference type="InterPro" id="IPR020081">
    <property type="entry name" value="SsrA-bd_prot_CS"/>
</dbReference>
<dbReference type="NCBIfam" id="NF003843">
    <property type="entry name" value="PRK05422.1"/>
    <property type="match status" value="1"/>
</dbReference>
<dbReference type="NCBIfam" id="TIGR00086">
    <property type="entry name" value="smpB"/>
    <property type="match status" value="1"/>
</dbReference>
<dbReference type="PANTHER" id="PTHR30308:SF2">
    <property type="entry name" value="SSRA-BINDING PROTEIN"/>
    <property type="match status" value="1"/>
</dbReference>
<dbReference type="PANTHER" id="PTHR30308">
    <property type="entry name" value="TMRNA-BINDING COMPONENT OF TRANS-TRANSLATION TAGGING COMPLEX"/>
    <property type="match status" value="1"/>
</dbReference>
<dbReference type="Pfam" id="PF01668">
    <property type="entry name" value="SmpB"/>
    <property type="match status" value="1"/>
</dbReference>
<dbReference type="SUPFAM" id="SSF74982">
    <property type="entry name" value="Small protein B (SmpB)"/>
    <property type="match status" value="1"/>
</dbReference>
<dbReference type="PROSITE" id="PS01317">
    <property type="entry name" value="SSRP"/>
    <property type="match status" value="1"/>
</dbReference>
<proteinExistence type="inferred from homology"/>
<reference key="1">
    <citation type="submission" date="2007-02" db="EMBL/GenBank/DDBJ databases">
        <title>Complete sequence of Mycobacterium sp. JLS.</title>
        <authorList>
            <consortium name="US DOE Joint Genome Institute"/>
            <person name="Copeland A."/>
            <person name="Lucas S."/>
            <person name="Lapidus A."/>
            <person name="Barry K."/>
            <person name="Detter J.C."/>
            <person name="Glavina del Rio T."/>
            <person name="Hammon N."/>
            <person name="Israni S."/>
            <person name="Dalin E."/>
            <person name="Tice H."/>
            <person name="Pitluck S."/>
            <person name="Chain P."/>
            <person name="Malfatti S."/>
            <person name="Shin M."/>
            <person name="Vergez L."/>
            <person name="Schmutz J."/>
            <person name="Larimer F."/>
            <person name="Land M."/>
            <person name="Hauser L."/>
            <person name="Kyrpides N."/>
            <person name="Mikhailova N."/>
            <person name="Miller C.D."/>
            <person name="Anderson A.J."/>
            <person name="Sims R.C."/>
            <person name="Richardson P."/>
        </authorList>
    </citation>
    <scope>NUCLEOTIDE SEQUENCE [LARGE SCALE GENOMIC DNA]</scope>
    <source>
        <strain>JLS</strain>
    </source>
</reference>
<sequence length="168" mass="18845">MAAKKAGKAGATKDRNNQVVASNRRARHNYAILDTYEAGIALMGTEVKSLRDGQASLADAFATVDDGEIWLRNLHIPEYQHGSWTNHAPRRNRKLLLHRREIDNLIGKIRDGNLTLVPLSLYFTGGKVKVELALARGKQAHDKRQDLARRDAEREVVRELGRRAKGMS</sequence>
<organism>
    <name type="scientific">Mycobacterium sp. (strain JLS)</name>
    <dbReference type="NCBI Taxonomy" id="164757"/>
    <lineage>
        <taxon>Bacteria</taxon>
        <taxon>Bacillati</taxon>
        <taxon>Actinomycetota</taxon>
        <taxon>Actinomycetes</taxon>
        <taxon>Mycobacteriales</taxon>
        <taxon>Mycobacteriaceae</taxon>
        <taxon>Mycobacterium</taxon>
    </lineage>
</organism>
<evidence type="ECO:0000255" key="1">
    <source>
        <dbReference type="HAMAP-Rule" id="MF_00023"/>
    </source>
</evidence>